<sequence>MTKKRKLESESNETSEPTEKQQQQCEKEDPEIRNVDNQRDDDEQVVEQDTLKEMHEEEAKGEDNIEAETSSGSGNQGNEDDDEEEPIEDLLEPFSKDQLLILLKEAAERHRDVANRIRIVADEDLVHRKIFVHGLGWDTKADSLIDAFKQYGEIEDCKCVVDKVSGQSKGYGFILFKSRSGARNALKQPQKKIGTRMTACQLASIGPVQGNPVVAPAQHFNPENVQRKIYVSNVSADIDPQKLLEFFSRFGEIEEGPLGLDKATGRPKGFALFVYRSLESAKKALEEPHKTFEGHVLHCHKANDGPKQVKQHQHNHNSHNQNSRYQRNDNNGYGAPGGHGHFIAGNNQAVQAFNPAIGQALTALLASQGAGLGLNQAFGQALLGTLGTASPGAVGGMPSGYGTQANISPGVYPGYGAQAGYQGGYQTQQPGQGGAGRGQHGAGYGGPYMGR</sequence>
<gene>
    <name type="primary">UBA2B</name>
    <name type="ordered locus">At2g41060</name>
    <name type="ORF">T3K9.17</name>
</gene>
<comment type="function">
    <text evidence="1">Heterogeneous nuclear ribonucleoprotein (hnRNP)-like protein that acts as a component of a complex regulating the turnover of mRNAs in the nucleus. Binds with high affinity to RNA molecules that contain U-rich sequences in 3'-UTRs. May function in complex with UBP1 and contribute to the stabilization of mRNAs in the nucleus (By similarity).</text>
</comment>
<comment type="subcellular location">
    <subcellularLocation>
        <location evidence="4 5">Nucleus</location>
    </subcellularLocation>
    <text>Relocalizes into nuclear speckles in response to abscisic acid (ABA).</text>
</comment>
<comment type="tissue specificity">
    <text evidence="4">Expressed in shoot meristem and flowers.</text>
</comment>
<comment type="induction">
    <text evidence="4">By wounding.</text>
</comment>
<comment type="miscellaneous">
    <text evidence="6">Plants over-expressing UB2A1 display severe growth defects consisting of premature cell death and chlorosis.</text>
</comment>
<keyword id="KW-0539">Nucleus</keyword>
<keyword id="KW-1185">Reference proteome</keyword>
<keyword id="KW-0677">Repeat</keyword>
<keyword id="KW-0694">RNA-binding</keyword>
<proteinExistence type="evidence at transcript level"/>
<protein>
    <recommendedName>
        <fullName>UBP1-associated protein 2B</fullName>
    </recommendedName>
</protein>
<evidence type="ECO:0000250" key="1"/>
<evidence type="ECO:0000255" key="2">
    <source>
        <dbReference type="PROSITE-ProRule" id="PRU00176"/>
    </source>
</evidence>
<evidence type="ECO:0000256" key="3">
    <source>
        <dbReference type="SAM" id="MobiDB-lite"/>
    </source>
</evidence>
<evidence type="ECO:0000269" key="4">
    <source>
    </source>
</evidence>
<evidence type="ECO:0000269" key="5">
    <source>
    </source>
</evidence>
<evidence type="ECO:0000305" key="6">
    <source>
    </source>
</evidence>
<feature type="chain" id="PRO_0000425441" description="UBP1-associated protein 2B">
    <location>
        <begin position="1"/>
        <end position="451"/>
    </location>
</feature>
<feature type="domain" description="RRM 1" evidence="2">
    <location>
        <begin position="128"/>
        <end position="236"/>
    </location>
</feature>
<feature type="domain" description="RRM 2" evidence="2">
    <location>
        <begin position="227"/>
        <end position="314"/>
    </location>
</feature>
<feature type="region of interest" description="Disordered" evidence="3">
    <location>
        <begin position="1"/>
        <end position="86"/>
    </location>
</feature>
<feature type="region of interest" description="Disordered" evidence="3">
    <location>
        <begin position="302"/>
        <end position="335"/>
    </location>
</feature>
<feature type="region of interest" description="Disordered" evidence="3">
    <location>
        <begin position="423"/>
        <end position="451"/>
    </location>
</feature>
<feature type="compositionally biased region" description="Basic and acidic residues" evidence="3">
    <location>
        <begin position="25"/>
        <end position="38"/>
    </location>
</feature>
<feature type="compositionally biased region" description="Basic and acidic residues" evidence="3">
    <location>
        <begin position="49"/>
        <end position="63"/>
    </location>
</feature>
<feature type="compositionally biased region" description="Polar residues" evidence="3">
    <location>
        <begin position="67"/>
        <end position="77"/>
    </location>
</feature>
<feature type="compositionally biased region" description="Gly residues" evidence="3">
    <location>
        <begin position="431"/>
        <end position="451"/>
    </location>
</feature>
<organism>
    <name type="scientific">Arabidopsis thaliana</name>
    <name type="common">Mouse-ear cress</name>
    <dbReference type="NCBI Taxonomy" id="3702"/>
    <lineage>
        <taxon>Eukaryota</taxon>
        <taxon>Viridiplantae</taxon>
        <taxon>Streptophyta</taxon>
        <taxon>Embryophyta</taxon>
        <taxon>Tracheophyta</taxon>
        <taxon>Spermatophyta</taxon>
        <taxon>Magnoliopsida</taxon>
        <taxon>eudicotyledons</taxon>
        <taxon>Gunneridae</taxon>
        <taxon>Pentapetalae</taxon>
        <taxon>rosids</taxon>
        <taxon>malvids</taxon>
        <taxon>Brassicales</taxon>
        <taxon>Brassicaceae</taxon>
        <taxon>Camelineae</taxon>
        <taxon>Arabidopsis</taxon>
    </lineage>
</organism>
<reference key="1">
    <citation type="journal article" date="1999" name="Nature">
        <title>Sequence and analysis of chromosome 2 of the plant Arabidopsis thaliana.</title>
        <authorList>
            <person name="Lin X."/>
            <person name="Kaul S."/>
            <person name="Rounsley S.D."/>
            <person name="Shea T.P."/>
            <person name="Benito M.-I."/>
            <person name="Town C.D."/>
            <person name="Fujii C.Y."/>
            <person name="Mason T.M."/>
            <person name="Bowman C.L."/>
            <person name="Barnstead M.E."/>
            <person name="Feldblyum T.V."/>
            <person name="Buell C.R."/>
            <person name="Ketchum K.A."/>
            <person name="Lee J.J."/>
            <person name="Ronning C.M."/>
            <person name="Koo H.L."/>
            <person name="Moffat K.S."/>
            <person name="Cronin L.A."/>
            <person name="Shen M."/>
            <person name="Pai G."/>
            <person name="Van Aken S."/>
            <person name="Umayam L."/>
            <person name="Tallon L.J."/>
            <person name="Gill J.E."/>
            <person name="Adams M.D."/>
            <person name="Carrera A.J."/>
            <person name="Creasy T.H."/>
            <person name="Goodman H.M."/>
            <person name="Somerville C.R."/>
            <person name="Copenhaver G.P."/>
            <person name="Preuss D."/>
            <person name="Nierman W.C."/>
            <person name="White O."/>
            <person name="Eisen J.A."/>
            <person name="Salzberg S.L."/>
            <person name="Fraser C.M."/>
            <person name="Venter J.C."/>
        </authorList>
    </citation>
    <scope>NUCLEOTIDE SEQUENCE [LARGE SCALE GENOMIC DNA]</scope>
    <source>
        <strain>cv. Columbia</strain>
    </source>
</reference>
<reference key="2">
    <citation type="journal article" date="2017" name="Plant J.">
        <title>Araport11: a complete reannotation of the Arabidopsis thaliana reference genome.</title>
        <authorList>
            <person name="Cheng C.Y."/>
            <person name="Krishnakumar V."/>
            <person name="Chan A.P."/>
            <person name="Thibaud-Nissen F."/>
            <person name="Schobel S."/>
            <person name="Town C.D."/>
        </authorList>
    </citation>
    <scope>GENOME REANNOTATION</scope>
    <source>
        <strain>cv. Columbia</strain>
    </source>
</reference>
<reference key="3">
    <citation type="journal article" date="2003" name="Science">
        <title>Empirical analysis of transcriptional activity in the Arabidopsis genome.</title>
        <authorList>
            <person name="Yamada K."/>
            <person name="Lim J."/>
            <person name="Dale J.M."/>
            <person name="Chen H."/>
            <person name="Shinn P."/>
            <person name="Palm C.J."/>
            <person name="Southwick A.M."/>
            <person name="Wu H.C."/>
            <person name="Kim C.J."/>
            <person name="Nguyen M."/>
            <person name="Pham P.K."/>
            <person name="Cheuk R.F."/>
            <person name="Karlin-Newmann G."/>
            <person name="Liu S.X."/>
            <person name="Lam B."/>
            <person name="Sakano H."/>
            <person name="Wu T."/>
            <person name="Yu G."/>
            <person name="Miranda M."/>
            <person name="Quach H.L."/>
            <person name="Tripp M."/>
            <person name="Chang C.H."/>
            <person name="Lee J.M."/>
            <person name="Toriumi M.J."/>
            <person name="Chan M.M."/>
            <person name="Tang C.C."/>
            <person name="Onodera C.S."/>
            <person name="Deng J.M."/>
            <person name="Akiyama K."/>
            <person name="Ansari Y."/>
            <person name="Arakawa T."/>
            <person name="Banh J."/>
            <person name="Banno F."/>
            <person name="Bowser L."/>
            <person name="Brooks S.Y."/>
            <person name="Carninci P."/>
            <person name="Chao Q."/>
            <person name="Choy N."/>
            <person name="Enju A."/>
            <person name="Goldsmith A.D."/>
            <person name="Gurjal M."/>
            <person name="Hansen N.F."/>
            <person name="Hayashizaki Y."/>
            <person name="Johnson-Hopson C."/>
            <person name="Hsuan V.W."/>
            <person name="Iida K."/>
            <person name="Karnes M."/>
            <person name="Khan S."/>
            <person name="Koesema E."/>
            <person name="Ishida J."/>
            <person name="Jiang P.X."/>
            <person name="Jones T."/>
            <person name="Kawai J."/>
            <person name="Kamiya A."/>
            <person name="Meyers C."/>
            <person name="Nakajima M."/>
            <person name="Narusaka M."/>
            <person name="Seki M."/>
            <person name="Sakurai T."/>
            <person name="Satou M."/>
            <person name="Tamse R."/>
            <person name="Vaysberg M."/>
            <person name="Wallender E.K."/>
            <person name="Wong C."/>
            <person name="Yamamura Y."/>
            <person name="Yuan S."/>
            <person name="Shinozaki K."/>
            <person name="Davis R.W."/>
            <person name="Theologis A."/>
            <person name="Ecker J.R."/>
        </authorList>
    </citation>
    <scope>NUCLEOTIDE SEQUENCE [LARGE SCALE MRNA]</scope>
    <source>
        <strain>cv. Columbia</strain>
    </source>
</reference>
<reference key="4">
    <citation type="submission" date="2006-07" db="EMBL/GenBank/DDBJ databases">
        <title>Large-scale analysis of RIKEN Arabidopsis full-length (RAFL) cDNAs.</title>
        <authorList>
            <person name="Totoki Y."/>
            <person name="Seki M."/>
            <person name="Ishida J."/>
            <person name="Nakajima M."/>
            <person name="Enju A."/>
            <person name="Kamiya A."/>
            <person name="Narusaka M."/>
            <person name="Shin-i T."/>
            <person name="Nakagawa M."/>
            <person name="Sakamoto N."/>
            <person name="Oishi K."/>
            <person name="Kohara Y."/>
            <person name="Kobayashi M."/>
            <person name="Toyoda A."/>
            <person name="Sakaki Y."/>
            <person name="Sakurai T."/>
            <person name="Iida K."/>
            <person name="Akiyama K."/>
            <person name="Satou M."/>
            <person name="Toyoda T."/>
            <person name="Konagaya A."/>
            <person name="Carninci P."/>
            <person name="Kawai J."/>
            <person name="Hayashizaki Y."/>
            <person name="Shinozaki K."/>
        </authorList>
    </citation>
    <scope>NUCLEOTIDE SEQUENCE [LARGE SCALE MRNA]</scope>
    <source>
        <strain>cv. Columbia</strain>
    </source>
</reference>
<reference key="5">
    <citation type="journal article" date="2008" name="Plant Mol. Biol.">
        <title>Characterization of wound-responsive RNA-binding proteins and their splice variants in Arabidopsis.</title>
        <authorList>
            <person name="Bove J."/>
            <person name="Kim C.Y."/>
            <person name="Gibson C.A."/>
            <person name="Assmann S.M."/>
        </authorList>
    </citation>
    <scope>SUBCELLULAR LOCATION</scope>
    <scope>TISSUE SPECIFICITY</scope>
    <scope>INDUCTION</scope>
</reference>
<reference key="6">
    <citation type="journal article" date="2008" name="New Phytol.">
        <title>Overexpression of wound-responsive RNA-binding proteins induces leaf senescence and hypersensitive-like cell death.</title>
        <authorList>
            <person name="Kim C.Y."/>
            <person name="Bove J."/>
            <person name="Assmann S.M."/>
        </authorList>
    </citation>
    <scope>SUBCELLULAR LOCATION</scope>
</reference>
<name>UBA2B_ARATH</name>
<accession>O80678</accession>
<dbReference type="EMBL" id="AC004261">
    <property type="protein sequence ID" value="AAD12005.1"/>
    <property type="molecule type" value="Genomic_DNA"/>
</dbReference>
<dbReference type="EMBL" id="CP002685">
    <property type="protein sequence ID" value="AEC09920.1"/>
    <property type="molecule type" value="Genomic_DNA"/>
</dbReference>
<dbReference type="EMBL" id="CP002685">
    <property type="protein sequence ID" value="AEC09921.1"/>
    <property type="molecule type" value="Genomic_DNA"/>
</dbReference>
<dbReference type="EMBL" id="CP002685">
    <property type="protein sequence ID" value="ANM62930.1"/>
    <property type="molecule type" value="Genomic_DNA"/>
</dbReference>
<dbReference type="EMBL" id="AF439844">
    <property type="protein sequence ID" value="AAL27512.1"/>
    <property type="molecule type" value="mRNA"/>
</dbReference>
<dbReference type="EMBL" id="AY133583">
    <property type="protein sequence ID" value="AAM91413.1"/>
    <property type="molecule type" value="mRNA"/>
</dbReference>
<dbReference type="EMBL" id="AK227158">
    <property type="protein sequence ID" value="BAE99200.1"/>
    <property type="molecule type" value="mRNA"/>
</dbReference>
<dbReference type="PIR" id="T02113">
    <property type="entry name" value="T02113"/>
</dbReference>
<dbReference type="RefSeq" id="NP_001078035.1">
    <property type="nucleotide sequence ID" value="NM_001084566.2"/>
</dbReference>
<dbReference type="RefSeq" id="NP_001318398.1">
    <property type="nucleotide sequence ID" value="NM_001336889.1"/>
</dbReference>
<dbReference type="RefSeq" id="NP_181639.1">
    <property type="nucleotide sequence ID" value="NM_129671.4"/>
</dbReference>
<dbReference type="SMR" id="O80678"/>
<dbReference type="BioGRID" id="4042">
    <property type="interactions" value="4"/>
</dbReference>
<dbReference type="FunCoup" id="O80678">
    <property type="interactions" value="1096"/>
</dbReference>
<dbReference type="IntAct" id="O80678">
    <property type="interactions" value="3"/>
</dbReference>
<dbReference type="STRING" id="3702.O80678"/>
<dbReference type="PaxDb" id="3702-AT2G41060.1"/>
<dbReference type="ProteomicsDB" id="242620"/>
<dbReference type="EnsemblPlants" id="AT2G41060.1">
    <property type="protein sequence ID" value="AT2G41060.1"/>
    <property type="gene ID" value="AT2G41060"/>
</dbReference>
<dbReference type="EnsemblPlants" id="AT2G41060.2">
    <property type="protein sequence ID" value="AT2G41060.2"/>
    <property type="gene ID" value="AT2G41060"/>
</dbReference>
<dbReference type="EnsemblPlants" id="AT2G41060.3">
    <property type="protein sequence ID" value="AT2G41060.3"/>
    <property type="gene ID" value="AT2G41060"/>
</dbReference>
<dbReference type="GeneID" id="818705"/>
<dbReference type="Gramene" id="AT2G41060.1">
    <property type="protein sequence ID" value="AT2G41060.1"/>
    <property type="gene ID" value="AT2G41060"/>
</dbReference>
<dbReference type="Gramene" id="AT2G41060.2">
    <property type="protein sequence ID" value="AT2G41060.2"/>
    <property type="gene ID" value="AT2G41060"/>
</dbReference>
<dbReference type="Gramene" id="AT2G41060.3">
    <property type="protein sequence ID" value="AT2G41060.3"/>
    <property type="gene ID" value="AT2G41060"/>
</dbReference>
<dbReference type="KEGG" id="ath:AT2G41060"/>
<dbReference type="Araport" id="AT2G41060"/>
<dbReference type="TAIR" id="AT2G41060"/>
<dbReference type="eggNOG" id="KOG0118">
    <property type="taxonomic scope" value="Eukaryota"/>
</dbReference>
<dbReference type="HOGENOM" id="CLU_012062_1_6_1"/>
<dbReference type="InParanoid" id="O80678"/>
<dbReference type="OMA" id="QNQNFAG"/>
<dbReference type="PhylomeDB" id="O80678"/>
<dbReference type="PRO" id="PR:O80678"/>
<dbReference type="Proteomes" id="UP000006548">
    <property type="component" value="Chromosome 2"/>
</dbReference>
<dbReference type="ExpressionAtlas" id="O80678">
    <property type="expression patterns" value="baseline and differential"/>
</dbReference>
<dbReference type="GO" id="GO:0005634">
    <property type="term" value="C:nucleus"/>
    <property type="evidence" value="ECO:0000314"/>
    <property type="project" value="TAIR"/>
</dbReference>
<dbReference type="GO" id="GO:0003729">
    <property type="term" value="F:mRNA binding"/>
    <property type="evidence" value="ECO:0000314"/>
    <property type="project" value="TAIR"/>
</dbReference>
<dbReference type="GO" id="GO:0008219">
    <property type="term" value="P:cell death"/>
    <property type="evidence" value="ECO:0000315"/>
    <property type="project" value="TAIR"/>
</dbReference>
<dbReference type="GO" id="GO:0006952">
    <property type="term" value="P:defense response"/>
    <property type="evidence" value="ECO:0000315"/>
    <property type="project" value="TAIR"/>
</dbReference>
<dbReference type="GO" id="GO:0009693">
    <property type="term" value="P:ethylene biosynthetic process"/>
    <property type="evidence" value="ECO:0000315"/>
    <property type="project" value="TAIR"/>
</dbReference>
<dbReference type="GO" id="GO:0010150">
    <property type="term" value="P:leaf senescence"/>
    <property type="evidence" value="ECO:0000315"/>
    <property type="project" value="TAIR"/>
</dbReference>
<dbReference type="FunFam" id="3.30.70.330:FF:000727">
    <property type="entry name" value="UBP1-associated protein 2A"/>
    <property type="match status" value="1"/>
</dbReference>
<dbReference type="FunFam" id="3.30.70.330:FF:000978">
    <property type="entry name" value="UBP1-associated protein 2A"/>
    <property type="match status" value="1"/>
</dbReference>
<dbReference type="Gene3D" id="3.30.70.330">
    <property type="match status" value="2"/>
</dbReference>
<dbReference type="InterPro" id="IPR012677">
    <property type="entry name" value="Nucleotide-bd_a/b_plait_sf"/>
</dbReference>
<dbReference type="InterPro" id="IPR035979">
    <property type="entry name" value="RBD_domain_sf"/>
</dbReference>
<dbReference type="InterPro" id="IPR000504">
    <property type="entry name" value="RRM_dom"/>
</dbReference>
<dbReference type="PANTHER" id="PTHR10352">
    <property type="entry name" value="EUKARYOTIC TRANSLATION INITIATION FACTOR 3 SUBUNIT G"/>
    <property type="match status" value="1"/>
</dbReference>
<dbReference type="Pfam" id="PF00076">
    <property type="entry name" value="RRM_1"/>
    <property type="match status" value="2"/>
</dbReference>
<dbReference type="SMART" id="SM00360">
    <property type="entry name" value="RRM"/>
    <property type="match status" value="2"/>
</dbReference>
<dbReference type="SUPFAM" id="SSF54928">
    <property type="entry name" value="RNA-binding domain, RBD"/>
    <property type="match status" value="2"/>
</dbReference>
<dbReference type="PROSITE" id="PS50102">
    <property type="entry name" value="RRM"/>
    <property type="match status" value="2"/>
</dbReference>